<name>RRF_CLOB8</name>
<organism>
    <name type="scientific">Clostridium beijerinckii (strain ATCC 51743 / NCIMB 8052)</name>
    <name type="common">Clostridium acetobutylicum</name>
    <dbReference type="NCBI Taxonomy" id="290402"/>
    <lineage>
        <taxon>Bacteria</taxon>
        <taxon>Bacillati</taxon>
        <taxon>Bacillota</taxon>
        <taxon>Clostridia</taxon>
        <taxon>Eubacteriales</taxon>
        <taxon>Clostridiaceae</taxon>
        <taxon>Clostridium</taxon>
    </lineage>
</organism>
<gene>
    <name evidence="1" type="primary">frr</name>
    <name type="ordered locus">Cbei_1191</name>
</gene>
<comment type="function">
    <text evidence="1">Responsible for the release of ribosomes from messenger RNA at the termination of protein biosynthesis. May increase the efficiency of translation by recycling ribosomes from one round of translation to another.</text>
</comment>
<comment type="subcellular location">
    <subcellularLocation>
        <location evidence="1">Cytoplasm</location>
    </subcellularLocation>
</comment>
<comment type="similarity">
    <text evidence="1">Belongs to the RRF family.</text>
</comment>
<accession>A6LSP3</accession>
<keyword id="KW-0963">Cytoplasm</keyword>
<keyword id="KW-0648">Protein biosynthesis</keyword>
<evidence type="ECO:0000255" key="1">
    <source>
        <dbReference type="HAMAP-Rule" id="MF_00040"/>
    </source>
</evidence>
<reference key="1">
    <citation type="submission" date="2007-06" db="EMBL/GenBank/DDBJ databases">
        <title>Complete sequence of Clostridium beijerinckii NCIMB 8052.</title>
        <authorList>
            <consortium name="US DOE Joint Genome Institute"/>
            <person name="Copeland A."/>
            <person name="Lucas S."/>
            <person name="Lapidus A."/>
            <person name="Barry K."/>
            <person name="Detter J.C."/>
            <person name="Glavina del Rio T."/>
            <person name="Hammon N."/>
            <person name="Israni S."/>
            <person name="Dalin E."/>
            <person name="Tice H."/>
            <person name="Pitluck S."/>
            <person name="Sims D."/>
            <person name="Brettin T."/>
            <person name="Bruce D."/>
            <person name="Tapia R."/>
            <person name="Brainard J."/>
            <person name="Schmutz J."/>
            <person name="Larimer F."/>
            <person name="Land M."/>
            <person name="Hauser L."/>
            <person name="Kyrpides N."/>
            <person name="Mikhailova N."/>
            <person name="Bennet G."/>
            <person name="Cann I."/>
            <person name="Chen J.-S."/>
            <person name="Contreras A.L."/>
            <person name="Jones D."/>
            <person name="Kashket E."/>
            <person name="Mitchell W."/>
            <person name="Stoddard S."/>
            <person name="Schwarz W."/>
            <person name="Qureshi N."/>
            <person name="Young M."/>
            <person name="Shi Z."/>
            <person name="Ezeji T."/>
            <person name="White B."/>
            <person name="Blaschek H."/>
            <person name="Richardson P."/>
        </authorList>
    </citation>
    <scope>NUCLEOTIDE SEQUENCE [LARGE SCALE GENOMIC DNA]</scope>
    <source>
        <strain>ATCC 51743 / NCIMB 8052</strain>
    </source>
</reference>
<feature type="chain" id="PRO_1000074575" description="Ribosome-recycling factor">
    <location>
        <begin position="1"/>
        <end position="185"/>
    </location>
</feature>
<dbReference type="EMBL" id="CP000721">
    <property type="protein sequence ID" value="ABR33373.1"/>
    <property type="molecule type" value="Genomic_DNA"/>
</dbReference>
<dbReference type="RefSeq" id="WP_011968528.1">
    <property type="nucleotide sequence ID" value="NC_009617.1"/>
</dbReference>
<dbReference type="SMR" id="A6LSP3"/>
<dbReference type="GeneID" id="66344181"/>
<dbReference type="KEGG" id="cbe:Cbei_1191"/>
<dbReference type="eggNOG" id="COG0233">
    <property type="taxonomic scope" value="Bacteria"/>
</dbReference>
<dbReference type="HOGENOM" id="CLU_073981_2_0_9"/>
<dbReference type="Proteomes" id="UP000000565">
    <property type="component" value="Chromosome"/>
</dbReference>
<dbReference type="GO" id="GO:0005737">
    <property type="term" value="C:cytoplasm"/>
    <property type="evidence" value="ECO:0007669"/>
    <property type="project" value="UniProtKB-SubCell"/>
</dbReference>
<dbReference type="GO" id="GO:0043023">
    <property type="term" value="F:ribosomal large subunit binding"/>
    <property type="evidence" value="ECO:0007669"/>
    <property type="project" value="TreeGrafter"/>
</dbReference>
<dbReference type="GO" id="GO:0006415">
    <property type="term" value="P:translational termination"/>
    <property type="evidence" value="ECO:0007669"/>
    <property type="project" value="UniProtKB-UniRule"/>
</dbReference>
<dbReference type="CDD" id="cd00520">
    <property type="entry name" value="RRF"/>
    <property type="match status" value="1"/>
</dbReference>
<dbReference type="FunFam" id="1.10.132.20:FF:000001">
    <property type="entry name" value="Ribosome-recycling factor"/>
    <property type="match status" value="1"/>
</dbReference>
<dbReference type="FunFam" id="3.30.1360.40:FF:000001">
    <property type="entry name" value="Ribosome-recycling factor"/>
    <property type="match status" value="1"/>
</dbReference>
<dbReference type="Gene3D" id="3.30.1360.40">
    <property type="match status" value="1"/>
</dbReference>
<dbReference type="Gene3D" id="1.10.132.20">
    <property type="entry name" value="Ribosome-recycling factor"/>
    <property type="match status" value="1"/>
</dbReference>
<dbReference type="HAMAP" id="MF_00040">
    <property type="entry name" value="RRF"/>
    <property type="match status" value="1"/>
</dbReference>
<dbReference type="InterPro" id="IPR002661">
    <property type="entry name" value="Ribosome_recyc_fac"/>
</dbReference>
<dbReference type="InterPro" id="IPR023584">
    <property type="entry name" value="Ribosome_recyc_fac_dom"/>
</dbReference>
<dbReference type="InterPro" id="IPR036191">
    <property type="entry name" value="RRF_sf"/>
</dbReference>
<dbReference type="NCBIfam" id="TIGR00496">
    <property type="entry name" value="frr"/>
    <property type="match status" value="1"/>
</dbReference>
<dbReference type="PANTHER" id="PTHR20982:SF3">
    <property type="entry name" value="MITOCHONDRIAL RIBOSOME RECYCLING FACTOR PSEUDO 1"/>
    <property type="match status" value="1"/>
</dbReference>
<dbReference type="PANTHER" id="PTHR20982">
    <property type="entry name" value="RIBOSOME RECYCLING FACTOR"/>
    <property type="match status" value="1"/>
</dbReference>
<dbReference type="Pfam" id="PF01765">
    <property type="entry name" value="RRF"/>
    <property type="match status" value="1"/>
</dbReference>
<dbReference type="SUPFAM" id="SSF55194">
    <property type="entry name" value="Ribosome recycling factor, RRF"/>
    <property type="match status" value="1"/>
</dbReference>
<proteinExistence type="inferred from homology"/>
<sequence>MIKDIIQNAEEKMKKTISVLKSDLSTMKAGRANPTMLDRIHVEYYGSMCPLSQVANVSAPEPRVLMITPWEKPLLKEIEKAILKSDLGLNPSSDGSIIRLVIPELTEETRKTLVKNVKKTGEEAKVAIRSIRKTANDKIKALKKDEDLSEDQVKKAEDEVQKKTDAVVKEIDSIIAAKEKEVLSV</sequence>
<protein>
    <recommendedName>
        <fullName evidence="1">Ribosome-recycling factor</fullName>
        <shortName evidence="1">RRF</shortName>
    </recommendedName>
    <alternativeName>
        <fullName evidence="1">Ribosome-releasing factor</fullName>
    </alternativeName>
</protein>